<accession>Q03785</accession>
<proteinExistence type="evidence at protein level"/>
<sequence length="461" mass="52136">MMMFHNCRINNYLITSQIGEGAYGLVYRALDIRTDRQYAIKAVVQSYGVSKEADMGNDKIHKNSVKLQKKLAKLFKESKNVVRVPSIDLESIENMSEEDFKKLPHYKEISLHLRVHHHKNIVTIHEVLQSAVCTFIVMDYYPTDLFTSIVDNRHFVTNGLLVKKVFLQICSALNYCHEHGIYHCDIKPENLLLDTEDNVFLCDFGLSTTSTYIKPNVCIGSSYYMPPERISFDGRVSSSKSGGHKLGKVCPSCNGDLWSLGIILINLTCIRNPWLKADKTEDNTYYYFTKDPNILKQILPLSDDFYSLLSKILQVNPKNRMSLQELMKEVSSITSFTNEGPLSKVPPLSKSVYEKFVSPVDNTNENLSPKSYVYMHDSKAAKNLSYTSSSEEEDGIKEGIDDDNGSRSGSFGTLDTDTGLHSSFTSTSCESDNECSKISNKFSLFEKKFNELRMSSSSLTN</sequence>
<keyword id="KW-0067">ATP-binding</keyword>
<keyword id="KW-0131">Cell cycle</keyword>
<keyword id="KW-0963">Cytoplasm</keyword>
<keyword id="KW-0418">Kinase</keyword>
<keyword id="KW-0547">Nucleotide-binding</keyword>
<keyword id="KW-1185">Reference proteome</keyword>
<keyword id="KW-0723">Serine/threonine-protein kinase</keyword>
<keyword id="KW-0808">Transferase</keyword>
<name>VHS1_YEAST</name>
<dbReference type="EC" id="2.7.11.1"/>
<dbReference type="EMBL" id="Z49701">
    <property type="protein sequence ID" value="CAA89733.1"/>
    <property type="molecule type" value="Genomic_DNA"/>
</dbReference>
<dbReference type="EMBL" id="BK006938">
    <property type="protein sequence ID" value="DAA12088.1"/>
    <property type="molecule type" value="Genomic_DNA"/>
</dbReference>
<dbReference type="PIR" id="S54543">
    <property type="entry name" value="S54543"/>
</dbReference>
<dbReference type="RefSeq" id="NP_010533.1">
    <property type="nucleotide sequence ID" value="NM_001180555.1"/>
</dbReference>
<dbReference type="SMR" id="Q03785"/>
<dbReference type="BioGRID" id="32298">
    <property type="interactions" value="215"/>
</dbReference>
<dbReference type="DIP" id="DIP-6532N"/>
<dbReference type="FunCoup" id="Q03785">
    <property type="interactions" value="287"/>
</dbReference>
<dbReference type="IntAct" id="Q03785">
    <property type="interactions" value="38"/>
</dbReference>
<dbReference type="MINT" id="Q03785"/>
<dbReference type="STRING" id="4932.YDR247W"/>
<dbReference type="iPTMnet" id="Q03785"/>
<dbReference type="PaxDb" id="4932-YDR247W"/>
<dbReference type="PeptideAtlas" id="Q03785"/>
<dbReference type="EnsemblFungi" id="YDR247W_mRNA">
    <property type="protein sequence ID" value="YDR247W"/>
    <property type="gene ID" value="YDR247W"/>
</dbReference>
<dbReference type="GeneID" id="851834"/>
<dbReference type="KEGG" id="sce:YDR247W"/>
<dbReference type="AGR" id="SGD:S000002655"/>
<dbReference type="SGD" id="S000002655">
    <property type="gene designation" value="VHS1"/>
</dbReference>
<dbReference type="VEuPathDB" id="FungiDB:YDR247W"/>
<dbReference type="eggNOG" id="KOG0583">
    <property type="taxonomic scope" value="Eukaryota"/>
</dbReference>
<dbReference type="GeneTree" id="ENSGT00940000176825"/>
<dbReference type="HOGENOM" id="CLU_000288_172_4_1"/>
<dbReference type="InParanoid" id="Q03785"/>
<dbReference type="OMA" id="CRINNYL"/>
<dbReference type="OrthoDB" id="541276at2759"/>
<dbReference type="BioCyc" id="YEAST:G3O-29820-MONOMER"/>
<dbReference type="BioGRID-ORCS" id="851834">
    <property type="hits" value="3 hits in 13 CRISPR screens"/>
</dbReference>
<dbReference type="PRO" id="PR:Q03785"/>
<dbReference type="Proteomes" id="UP000002311">
    <property type="component" value="Chromosome IV"/>
</dbReference>
<dbReference type="RNAct" id="Q03785">
    <property type="molecule type" value="protein"/>
</dbReference>
<dbReference type="GO" id="GO:0005737">
    <property type="term" value="C:cytoplasm"/>
    <property type="evidence" value="ECO:0007005"/>
    <property type="project" value="SGD"/>
</dbReference>
<dbReference type="GO" id="GO:0005634">
    <property type="term" value="C:nucleus"/>
    <property type="evidence" value="ECO:0000318"/>
    <property type="project" value="GO_Central"/>
</dbReference>
<dbReference type="GO" id="GO:0005524">
    <property type="term" value="F:ATP binding"/>
    <property type="evidence" value="ECO:0007669"/>
    <property type="project" value="UniProtKB-KW"/>
</dbReference>
<dbReference type="GO" id="GO:0004672">
    <property type="term" value="F:protein kinase activity"/>
    <property type="evidence" value="ECO:0007005"/>
    <property type="project" value="SGD"/>
</dbReference>
<dbReference type="GO" id="GO:0106310">
    <property type="term" value="F:protein serine kinase activity"/>
    <property type="evidence" value="ECO:0007669"/>
    <property type="project" value="RHEA"/>
</dbReference>
<dbReference type="GO" id="GO:0004674">
    <property type="term" value="F:protein serine/threonine kinase activity"/>
    <property type="evidence" value="ECO:0000314"/>
    <property type="project" value="SGD"/>
</dbReference>
<dbReference type="GO" id="GO:0000082">
    <property type="term" value="P:G1/S transition of mitotic cell cycle"/>
    <property type="evidence" value="ECO:0000316"/>
    <property type="project" value="SGD"/>
</dbReference>
<dbReference type="GO" id="GO:0000086">
    <property type="term" value="P:G2/M transition of mitotic cell cycle"/>
    <property type="evidence" value="ECO:0000318"/>
    <property type="project" value="GO_Central"/>
</dbReference>
<dbReference type="GO" id="GO:0032880">
    <property type="term" value="P:regulation of protein localization"/>
    <property type="evidence" value="ECO:0000315"/>
    <property type="project" value="SGD"/>
</dbReference>
<dbReference type="CDD" id="cd13993">
    <property type="entry name" value="STKc_Pat1_like"/>
    <property type="match status" value="1"/>
</dbReference>
<dbReference type="FunFam" id="1.10.510.10:FF:000873">
    <property type="entry name" value="Serine/threonine-protein kinase VHS1"/>
    <property type="match status" value="1"/>
</dbReference>
<dbReference type="Gene3D" id="3.30.200.20">
    <property type="entry name" value="Phosphorylase Kinase, domain 1"/>
    <property type="match status" value="1"/>
</dbReference>
<dbReference type="Gene3D" id="1.10.510.10">
    <property type="entry name" value="Transferase(Phosphotransferase) domain 1"/>
    <property type="match status" value="1"/>
</dbReference>
<dbReference type="InterPro" id="IPR011009">
    <property type="entry name" value="Kinase-like_dom_sf"/>
</dbReference>
<dbReference type="InterPro" id="IPR000719">
    <property type="entry name" value="Prot_kinase_dom"/>
</dbReference>
<dbReference type="InterPro" id="IPR017441">
    <property type="entry name" value="Protein_kinase_ATP_BS"/>
</dbReference>
<dbReference type="InterPro" id="IPR008271">
    <property type="entry name" value="Ser/Thr_kinase_AS"/>
</dbReference>
<dbReference type="PANTHER" id="PTHR44167">
    <property type="entry name" value="OVARIAN-SPECIFIC SERINE/THREONINE-PROTEIN KINASE LOK-RELATED"/>
    <property type="match status" value="1"/>
</dbReference>
<dbReference type="PANTHER" id="PTHR44167:SF24">
    <property type="entry name" value="SERINE_THREONINE-PROTEIN KINASE CHK2"/>
    <property type="match status" value="1"/>
</dbReference>
<dbReference type="Pfam" id="PF00069">
    <property type="entry name" value="Pkinase"/>
    <property type="match status" value="1"/>
</dbReference>
<dbReference type="SMART" id="SM00220">
    <property type="entry name" value="S_TKc"/>
    <property type="match status" value="1"/>
</dbReference>
<dbReference type="SUPFAM" id="SSF56112">
    <property type="entry name" value="Protein kinase-like (PK-like)"/>
    <property type="match status" value="1"/>
</dbReference>
<dbReference type="PROSITE" id="PS00107">
    <property type="entry name" value="PROTEIN_KINASE_ATP"/>
    <property type="match status" value="1"/>
</dbReference>
<dbReference type="PROSITE" id="PS50011">
    <property type="entry name" value="PROTEIN_KINASE_DOM"/>
    <property type="match status" value="1"/>
</dbReference>
<dbReference type="PROSITE" id="PS00108">
    <property type="entry name" value="PROTEIN_KINASE_ST"/>
    <property type="match status" value="1"/>
</dbReference>
<organism>
    <name type="scientific">Saccharomyces cerevisiae (strain ATCC 204508 / S288c)</name>
    <name type="common">Baker's yeast</name>
    <dbReference type="NCBI Taxonomy" id="559292"/>
    <lineage>
        <taxon>Eukaryota</taxon>
        <taxon>Fungi</taxon>
        <taxon>Dikarya</taxon>
        <taxon>Ascomycota</taxon>
        <taxon>Saccharomycotina</taxon>
        <taxon>Saccharomycetes</taxon>
        <taxon>Saccharomycetales</taxon>
        <taxon>Saccharomycetaceae</taxon>
        <taxon>Saccharomyces</taxon>
    </lineage>
</organism>
<gene>
    <name type="primary">VHS1</name>
    <name type="ordered locus">YDR247W</name>
    <name type="ORF">YD8419.14</name>
</gene>
<protein>
    <recommendedName>
        <fullName>Serine/threonine-protein kinase VHS1</fullName>
        <ecNumber>2.7.11.1</ecNumber>
    </recommendedName>
    <alternativeName>
        <fullName>Viable in a HAL3 SIT4 background protein 1</fullName>
    </alternativeName>
</protein>
<feature type="chain" id="PRO_0000086789" description="Serine/threonine-protein kinase VHS1">
    <location>
        <begin position="1"/>
        <end position="461"/>
    </location>
</feature>
<feature type="domain" description="Protein kinase" evidence="1">
    <location>
        <begin position="12"/>
        <end position="337"/>
    </location>
</feature>
<feature type="region of interest" description="Disordered" evidence="3">
    <location>
        <begin position="384"/>
        <end position="433"/>
    </location>
</feature>
<feature type="compositionally biased region" description="Acidic residues" evidence="3">
    <location>
        <begin position="390"/>
        <end position="403"/>
    </location>
</feature>
<feature type="compositionally biased region" description="Polar residues" evidence="3">
    <location>
        <begin position="406"/>
        <end position="433"/>
    </location>
</feature>
<feature type="active site" description="Proton acceptor" evidence="1 2">
    <location>
        <position position="185"/>
    </location>
</feature>
<feature type="binding site" evidence="1">
    <location>
        <begin position="18"/>
        <end position="26"/>
    </location>
    <ligand>
        <name>ATP</name>
        <dbReference type="ChEBI" id="CHEBI:30616"/>
    </ligand>
</feature>
<feature type="binding site" evidence="1">
    <location>
        <position position="41"/>
    </location>
    <ligand>
        <name>ATP</name>
        <dbReference type="ChEBI" id="CHEBI:30616"/>
    </ligand>
</feature>
<evidence type="ECO:0000255" key="1">
    <source>
        <dbReference type="PROSITE-ProRule" id="PRU00159"/>
    </source>
</evidence>
<evidence type="ECO:0000255" key="2">
    <source>
        <dbReference type="PROSITE-ProRule" id="PRU10027"/>
    </source>
</evidence>
<evidence type="ECO:0000256" key="3">
    <source>
        <dbReference type="SAM" id="MobiDB-lite"/>
    </source>
</evidence>
<evidence type="ECO:0000269" key="4">
    <source>
    </source>
</evidence>
<evidence type="ECO:0000269" key="5">
    <source>
    </source>
</evidence>
<evidence type="ECO:0000269" key="6">
    <source>
    </source>
</evidence>
<comment type="function">
    <text evidence="4">Probable serine/threonine protein kinase involved in the G1-S transition.</text>
</comment>
<comment type="catalytic activity">
    <reaction>
        <text>L-seryl-[protein] + ATP = O-phospho-L-seryl-[protein] + ADP + H(+)</text>
        <dbReference type="Rhea" id="RHEA:17989"/>
        <dbReference type="Rhea" id="RHEA-COMP:9863"/>
        <dbReference type="Rhea" id="RHEA-COMP:11604"/>
        <dbReference type="ChEBI" id="CHEBI:15378"/>
        <dbReference type="ChEBI" id="CHEBI:29999"/>
        <dbReference type="ChEBI" id="CHEBI:30616"/>
        <dbReference type="ChEBI" id="CHEBI:83421"/>
        <dbReference type="ChEBI" id="CHEBI:456216"/>
        <dbReference type="EC" id="2.7.11.1"/>
    </reaction>
</comment>
<comment type="catalytic activity">
    <reaction>
        <text>L-threonyl-[protein] + ATP = O-phospho-L-threonyl-[protein] + ADP + H(+)</text>
        <dbReference type="Rhea" id="RHEA:46608"/>
        <dbReference type="Rhea" id="RHEA-COMP:11060"/>
        <dbReference type="Rhea" id="RHEA-COMP:11605"/>
        <dbReference type="ChEBI" id="CHEBI:15378"/>
        <dbReference type="ChEBI" id="CHEBI:30013"/>
        <dbReference type="ChEBI" id="CHEBI:30616"/>
        <dbReference type="ChEBI" id="CHEBI:61977"/>
        <dbReference type="ChEBI" id="CHEBI:456216"/>
        <dbReference type="EC" id="2.7.11.1"/>
    </reaction>
</comment>
<comment type="interaction">
    <interactant intactId="EBI-35568">
        <id>Q03785</id>
    </interactant>
    <interactant intactId="EBI-4192">
        <id>Q00684</id>
        <label>CDC14</label>
    </interactant>
    <organismsDiffer>false</organismsDiffer>
    <experiments>2</experiments>
</comment>
<comment type="subcellular location">
    <subcellularLocation>
        <location evidence="5">Cytoplasm</location>
    </subcellularLocation>
</comment>
<comment type="miscellaneous">
    <text evidence="6">Present with 780 molecules/cell in log phase SD medium.</text>
</comment>
<comment type="similarity">
    <text evidence="1">Belongs to the protein kinase superfamily. Ser/Thr protein kinase family.</text>
</comment>
<reference key="1">
    <citation type="journal article" date="1997" name="Nature">
        <title>The nucleotide sequence of Saccharomyces cerevisiae chromosome IV.</title>
        <authorList>
            <person name="Jacq C."/>
            <person name="Alt-Moerbe J."/>
            <person name="Andre B."/>
            <person name="Arnold W."/>
            <person name="Bahr A."/>
            <person name="Ballesta J.P.G."/>
            <person name="Bargues M."/>
            <person name="Baron L."/>
            <person name="Becker A."/>
            <person name="Biteau N."/>
            <person name="Bloecker H."/>
            <person name="Blugeon C."/>
            <person name="Boskovic J."/>
            <person name="Brandt P."/>
            <person name="Brueckner M."/>
            <person name="Buitrago M.J."/>
            <person name="Coster F."/>
            <person name="Delaveau T."/>
            <person name="del Rey F."/>
            <person name="Dujon B."/>
            <person name="Eide L.G."/>
            <person name="Garcia-Cantalejo J.M."/>
            <person name="Goffeau A."/>
            <person name="Gomez-Peris A."/>
            <person name="Granotier C."/>
            <person name="Hanemann V."/>
            <person name="Hankeln T."/>
            <person name="Hoheisel J.D."/>
            <person name="Jaeger W."/>
            <person name="Jimenez A."/>
            <person name="Jonniaux J.-L."/>
            <person name="Kraemer C."/>
            <person name="Kuester H."/>
            <person name="Laamanen P."/>
            <person name="Legros Y."/>
            <person name="Louis E.J."/>
            <person name="Moeller-Rieker S."/>
            <person name="Monnet A."/>
            <person name="Moro M."/>
            <person name="Mueller-Auer S."/>
            <person name="Nussbaumer B."/>
            <person name="Paricio N."/>
            <person name="Paulin L."/>
            <person name="Perea J."/>
            <person name="Perez-Alonso M."/>
            <person name="Perez-Ortin J.E."/>
            <person name="Pohl T.M."/>
            <person name="Prydz H."/>
            <person name="Purnelle B."/>
            <person name="Rasmussen S.W."/>
            <person name="Remacha M.A."/>
            <person name="Revuelta J.L."/>
            <person name="Rieger M."/>
            <person name="Salom D."/>
            <person name="Saluz H.P."/>
            <person name="Saiz J.E."/>
            <person name="Saren A.-M."/>
            <person name="Schaefer M."/>
            <person name="Scharfe M."/>
            <person name="Schmidt E.R."/>
            <person name="Schneider C."/>
            <person name="Scholler P."/>
            <person name="Schwarz S."/>
            <person name="Soler-Mira A."/>
            <person name="Urrestarazu L.A."/>
            <person name="Verhasselt P."/>
            <person name="Vissers S."/>
            <person name="Voet M."/>
            <person name="Volckaert G."/>
            <person name="Wagner G."/>
            <person name="Wambutt R."/>
            <person name="Wedler E."/>
            <person name="Wedler H."/>
            <person name="Woelfl S."/>
            <person name="Harris D.E."/>
            <person name="Bowman S."/>
            <person name="Brown D."/>
            <person name="Churcher C.M."/>
            <person name="Connor R."/>
            <person name="Dedman K."/>
            <person name="Gentles S."/>
            <person name="Hamlin N."/>
            <person name="Hunt S."/>
            <person name="Jones L."/>
            <person name="McDonald S."/>
            <person name="Murphy L.D."/>
            <person name="Niblett D."/>
            <person name="Odell C."/>
            <person name="Oliver K."/>
            <person name="Rajandream M.A."/>
            <person name="Richards C."/>
            <person name="Shore L."/>
            <person name="Walsh S.V."/>
            <person name="Barrell B.G."/>
            <person name="Dietrich F.S."/>
            <person name="Mulligan J.T."/>
            <person name="Allen E."/>
            <person name="Araujo R."/>
            <person name="Aviles E."/>
            <person name="Berno A."/>
            <person name="Carpenter J."/>
            <person name="Chen E."/>
            <person name="Cherry J.M."/>
            <person name="Chung E."/>
            <person name="Duncan M."/>
            <person name="Hunicke-Smith S."/>
            <person name="Hyman R.W."/>
            <person name="Komp C."/>
            <person name="Lashkari D."/>
            <person name="Lew H."/>
            <person name="Lin D."/>
            <person name="Mosedale D."/>
            <person name="Nakahara K."/>
            <person name="Namath A."/>
            <person name="Oefner P."/>
            <person name="Oh C."/>
            <person name="Petel F.X."/>
            <person name="Roberts D."/>
            <person name="Schramm S."/>
            <person name="Schroeder M."/>
            <person name="Shogren T."/>
            <person name="Shroff N."/>
            <person name="Winant A."/>
            <person name="Yelton M.A."/>
            <person name="Botstein D."/>
            <person name="Davis R.W."/>
            <person name="Johnston M."/>
            <person name="Andrews S."/>
            <person name="Brinkman R."/>
            <person name="Cooper J."/>
            <person name="Ding H."/>
            <person name="Du Z."/>
            <person name="Favello A."/>
            <person name="Fulton L."/>
            <person name="Gattung S."/>
            <person name="Greco T."/>
            <person name="Hallsworth K."/>
            <person name="Hawkins J."/>
            <person name="Hillier L.W."/>
            <person name="Jier M."/>
            <person name="Johnson D."/>
            <person name="Johnston L."/>
            <person name="Kirsten J."/>
            <person name="Kucaba T."/>
            <person name="Langston Y."/>
            <person name="Latreille P."/>
            <person name="Le T."/>
            <person name="Mardis E."/>
            <person name="Menezes S."/>
            <person name="Miller N."/>
            <person name="Nhan M."/>
            <person name="Pauley A."/>
            <person name="Peluso D."/>
            <person name="Rifkin L."/>
            <person name="Riles L."/>
            <person name="Taich A."/>
            <person name="Trevaskis E."/>
            <person name="Vignati D."/>
            <person name="Wilcox L."/>
            <person name="Wohldman P."/>
            <person name="Vaudin M."/>
            <person name="Wilson R."/>
            <person name="Waterston R."/>
            <person name="Albermann K."/>
            <person name="Hani J."/>
            <person name="Heumann K."/>
            <person name="Kleine K."/>
            <person name="Mewes H.-W."/>
            <person name="Zollner A."/>
            <person name="Zaccaria P."/>
        </authorList>
    </citation>
    <scope>NUCLEOTIDE SEQUENCE [LARGE SCALE GENOMIC DNA]</scope>
    <source>
        <strain>ATCC 204508 / S288c</strain>
    </source>
</reference>
<reference key="2">
    <citation type="journal article" date="2014" name="G3 (Bethesda)">
        <title>The reference genome sequence of Saccharomyces cerevisiae: Then and now.</title>
        <authorList>
            <person name="Engel S.R."/>
            <person name="Dietrich F.S."/>
            <person name="Fisk D.G."/>
            <person name="Binkley G."/>
            <person name="Balakrishnan R."/>
            <person name="Costanzo M.C."/>
            <person name="Dwight S.S."/>
            <person name="Hitz B.C."/>
            <person name="Karra K."/>
            <person name="Nash R.S."/>
            <person name="Weng S."/>
            <person name="Wong E.D."/>
            <person name="Lloyd P."/>
            <person name="Skrzypek M.S."/>
            <person name="Miyasato S.R."/>
            <person name="Simison M."/>
            <person name="Cherry J.M."/>
        </authorList>
    </citation>
    <scope>GENOME REANNOTATION</scope>
    <source>
        <strain>ATCC 204508 / S288c</strain>
    </source>
</reference>
<reference key="3">
    <citation type="journal article" date="2003" name="Yeast">
        <title>Identification of multicopy suppressors of cell cycle arrest at the G1-S transition in Saccharomyces cerevisiae.</title>
        <authorList>
            <person name="Munoz I."/>
            <person name="Simon E."/>
            <person name="Casals N."/>
            <person name="Clotet J."/>
            <person name="Arino J."/>
        </authorList>
    </citation>
    <scope>FUNCTION</scope>
</reference>
<reference key="4">
    <citation type="journal article" date="2003" name="Nature">
        <title>Global analysis of protein localization in budding yeast.</title>
        <authorList>
            <person name="Huh W.-K."/>
            <person name="Falvo J.V."/>
            <person name="Gerke L.C."/>
            <person name="Carroll A.S."/>
            <person name="Howson R.W."/>
            <person name="Weissman J.S."/>
            <person name="O'Shea E.K."/>
        </authorList>
    </citation>
    <scope>SUBCELLULAR LOCATION [LARGE SCALE ANALYSIS]</scope>
</reference>
<reference key="5">
    <citation type="journal article" date="2003" name="Nature">
        <title>Global analysis of protein expression in yeast.</title>
        <authorList>
            <person name="Ghaemmaghami S."/>
            <person name="Huh W.-K."/>
            <person name="Bower K."/>
            <person name="Howson R.W."/>
            <person name="Belle A."/>
            <person name="Dephoure N."/>
            <person name="O'Shea E.K."/>
            <person name="Weissman J.S."/>
        </authorList>
    </citation>
    <scope>LEVEL OF PROTEIN EXPRESSION [LARGE SCALE ANALYSIS]</scope>
</reference>